<feature type="chain" id="PRO_1000120493" description="Polyphosphate kinase">
    <location>
        <begin position="1"/>
        <end position="693"/>
    </location>
</feature>
<feature type="active site" description="Phosphohistidine intermediate" evidence="1">
    <location>
        <position position="443"/>
    </location>
</feature>
<feature type="binding site" evidence="1">
    <location>
        <position position="57"/>
    </location>
    <ligand>
        <name>ATP</name>
        <dbReference type="ChEBI" id="CHEBI:30616"/>
    </ligand>
</feature>
<feature type="binding site" evidence="1">
    <location>
        <position position="383"/>
    </location>
    <ligand>
        <name>Mg(2+)</name>
        <dbReference type="ChEBI" id="CHEBI:18420"/>
    </ligand>
</feature>
<feature type="binding site" evidence="1">
    <location>
        <position position="413"/>
    </location>
    <ligand>
        <name>Mg(2+)</name>
        <dbReference type="ChEBI" id="CHEBI:18420"/>
    </ligand>
</feature>
<feature type="binding site" evidence="1">
    <location>
        <position position="476"/>
    </location>
    <ligand>
        <name>ATP</name>
        <dbReference type="ChEBI" id="CHEBI:30616"/>
    </ligand>
</feature>
<feature type="binding site" evidence="1">
    <location>
        <position position="572"/>
    </location>
    <ligand>
        <name>ATP</name>
        <dbReference type="ChEBI" id="CHEBI:30616"/>
    </ligand>
</feature>
<feature type="binding site" evidence="1">
    <location>
        <position position="601"/>
    </location>
    <ligand>
        <name>ATP</name>
        <dbReference type="ChEBI" id="CHEBI:30616"/>
    </ligand>
</feature>
<sequence>MNTAITATTPTEYSYNDRYINRELSILDFHLRVLEQAVDPLHPLLERMNFLLIFSRNLDEFFEIRVAGVMEQFALGNESRSPDGLTPRQVLQKISETAHAAIERQYRILNEEILPKLREEDICFLRRGELTPAQSAWVKKYFQEQVAPVLTPISLDPAHPFPRLVNKSLNFIVTLEGKDAFGRQIDLAVVPAPRSLPRVVRLPDELTGGKEHHVMLSAIIHEHVSDLFPGMTATGCYQFRVTRNADLALNEDVEDLAKALKGELSSRRFGRAVRLEVTQNCPQHIYEYLLEEFDLNEEQLYKVDGPVNLARLVSNFKRPHLRYDSHTPVVPKVFKKTESIFSAMQKQDILLHHPFESFAPVIQLLREAARDPQVLAIKQTLYRSGADSEIVQVLAEAARNGKEVTAVIELRARFDEESNIEVANVLQEAGAVVVYGIVGYKTHAKMIMVVRRENNKLVRYVHLGTGNYHAMNARIYTDYGLMTTDKDLCEDVHRIFQELTGMGKMAKLKKLLHAPFTLHAQLINFIDEEIANAKAGRKAQIIVKVNALTEVQLINKLYEASQAGVQVDLIIRYDLLFTSGITKFIGKHSGTFNCRTVSFEHTRVYYFSNNGDARIYCSSADWMDRNLFNRVEACFPIEDPALKKRIYQQGLLNYLQDNQQAWLLQGDGTWVRAQPAAGEKLHNAQRELLETFK</sequence>
<proteinExistence type="inferred from homology"/>
<protein>
    <recommendedName>
        <fullName evidence="1">Polyphosphate kinase</fullName>
        <ecNumber evidence="1">2.7.4.1</ecNumber>
    </recommendedName>
    <alternativeName>
        <fullName evidence="1">ATP-polyphosphate phosphotransferase</fullName>
    </alternativeName>
    <alternativeName>
        <fullName evidence="1">Polyphosphoric acid kinase</fullName>
    </alternativeName>
</protein>
<evidence type="ECO:0000255" key="1">
    <source>
        <dbReference type="HAMAP-Rule" id="MF_00347"/>
    </source>
</evidence>
<accession>A3M3C8</accession>
<organism>
    <name type="scientific">Acinetobacter baumannii (strain ATCC 17978 / DSM 105126 / CIP 53.77 / LMG 1025 / NCDC KC755 / 5377)</name>
    <dbReference type="NCBI Taxonomy" id="400667"/>
    <lineage>
        <taxon>Bacteria</taxon>
        <taxon>Pseudomonadati</taxon>
        <taxon>Pseudomonadota</taxon>
        <taxon>Gammaproteobacteria</taxon>
        <taxon>Moraxellales</taxon>
        <taxon>Moraxellaceae</taxon>
        <taxon>Acinetobacter</taxon>
        <taxon>Acinetobacter calcoaceticus/baumannii complex</taxon>
    </lineage>
</organism>
<name>PPK1_ACIBT</name>
<reference key="1">
    <citation type="journal article" date="2007" name="Genes Dev.">
        <title>New insights into Acinetobacter baumannii pathogenesis revealed by high-density pyrosequencing and transposon mutagenesis.</title>
        <authorList>
            <person name="Smith M.G."/>
            <person name="Gianoulis T.A."/>
            <person name="Pukatzki S."/>
            <person name="Mekalanos J.J."/>
            <person name="Ornston L.N."/>
            <person name="Gerstein M."/>
            <person name="Snyder M."/>
        </authorList>
    </citation>
    <scope>NUCLEOTIDE SEQUENCE [LARGE SCALE GENOMIC DNA]</scope>
    <source>
        <strain>ATCC 17978 / DSM 105126 / CIP 53.77 / LMG 1025 / NCDC KC755 / 5377</strain>
    </source>
</reference>
<dbReference type="EC" id="2.7.4.1" evidence="1"/>
<dbReference type="EMBL" id="CP000521">
    <property type="protein sequence ID" value="ABO11422.2"/>
    <property type="molecule type" value="Genomic_DNA"/>
</dbReference>
<dbReference type="SMR" id="A3M3C8"/>
<dbReference type="KEGG" id="acb:A1S_0990"/>
<dbReference type="HOGENOM" id="CLU_009678_5_0_6"/>
<dbReference type="GO" id="GO:0009358">
    <property type="term" value="C:polyphosphate kinase complex"/>
    <property type="evidence" value="ECO:0007669"/>
    <property type="project" value="InterPro"/>
</dbReference>
<dbReference type="GO" id="GO:0005524">
    <property type="term" value="F:ATP binding"/>
    <property type="evidence" value="ECO:0007669"/>
    <property type="project" value="UniProtKB-KW"/>
</dbReference>
<dbReference type="GO" id="GO:0046872">
    <property type="term" value="F:metal ion binding"/>
    <property type="evidence" value="ECO:0007669"/>
    <property type="project" value="UniProtKB-KW"/>
</dbReference>
<dbReference type="GO" id="GO:0008976">
    <property type="term" value="F:polyphosphate kinase activity"/>
    <property type="evidence" value="ECO:0007669"/>
    <property type="project" value="UniProtKB-UniRule"/>
</dbReference>
<dbReference type="GO" id="GO:0006799">
    <property type="term" value="P:polyphosphate biosynthetic process"/>
    <property type="evidence" value="ECO:0007669"/>
    <property type="project" value="UniProtKB-UniRule"/>
</dbReference>
<dbReference type="CDD" id="cd09165">
    <property type="entry name" value="PLDc_PaPPK1_C1_like"/>
    <property type="match status" value="1"/>
</dbReference>
<dbReference type="Gene3D" id="3.30.870.10">
    <property type="entry name" value="Endonuclease Chain A"/>
    <property type="match status" value="2"/>
</dbReference>
<dbReference type="Gene3D" id="3.30.1840.10">
    <property type="entry name" value="Polyphosphate kinase middle domain"/>
    <property type="match status" value="1"/>
</dbReference>
<dbReference type="Gene3D" id="1.20.58.310">
    <property type="entry name" value="Polyphosphate kinase N-terminal domain"/>
    <property type="match status" value="1"/>
</dbReference>
<dbReference type="HAMAP" id="MF_00347">
    <property type="entry name" value="Polyphosphate_kinase"/>
    <property type="match status" value="1"/>
</dbReference>
<dbReference type="InterPro" id="IPR003414">
    <property type="entry name" value="PP_kinase"/>
</dbReference>
<dbReference type="InterPro" id="IPR041108">
    <property type="entry name" value="PP_kinase_C_1"/>
</dbReference>
<dbReference type="InterPro" id="IPR024953">
    <property type="entry name" value="PP_kinase_middle"/>
</dbReference>
<dbReference type="InterPro" id="IPR036830">
    <property type="entry name" value="PP_kinase_middle_dom_sf"/>
</dbReference>
<dbReference type="InterPro" id="IPR025200">
    <property type="entry name" value="PPK_C_dom2"/>
</dbReference>
<dbReference type="InterPro" id="IPR025198">
    <property type="entry name" value="PPK_N_dom"/>
</dbReference>
<dbReference type="InterPro" id="IPR036832">
    <property type="entry name" value="PPK_N_dom_sf"/>
</dbReference>
<dbReference type="NCBIfam" id="TIGR03705">
    <property type="entry name" value="poly_P_kin"/>
    <property type="match status" value="1"/>
</dbReference>
<dbReference type="NCBIfam" id="NF003917">
    <property type="entry name" value="PRK05443.1-1"/>
    <property type="match status" value="1"/>
</dbReference>
<dbReference type="NCBIfam" id="NF003918">
    <property type="entry name" value="PRK05443.1-2"/>
    <property type="match status" value="1"/>
</dbReference>
<dbReference type="NCBIfam" id="NF003921">
    <property type="entry name" value="PRK05443.2-2"/>
    <property type="match status" value="1"/>
</dbReference>
<dbReference type="PANTHER" id="PTHR30218">
    <property type="entry name" value="POLYPHOSPHATE KINASE"/>
    <property type="match status" value="1"/>
</dbReference>
<dbReference type="PANTHER" id="PTHR30218:SF0">
    <property type="entry name" value="POLYPHOSPHATE KINASE"/>
    <property type="match status" value="1"/>
</dbReference>
<dbReference type="Pfam" id="PF02503">
    <property type="entry name" value="PP_kinase"/>
    <property type="match status" value="1"/>
</dbReference>
<dbReference type="Pfam" id="PF13090">
    <property type="entry name" value="PP_kinase_C"/>
    <property type="match status" value="1"/>
</dbReference>
<dbReference type="Pfam" id="PF17941">
    <property type="entry name" value="PP_kinase_C_1"/>
    <property type="match status" value="1"/>
</dbReference>
<dbReference type="Pfam" id="PF13089">
    <property type="entry name" value="PP_kinase_N"/>
    <property type="match status" value="1"/>
</dbReference>
<dbReference type="PIRSF" id="PIRSF015589">
    <property type="entry name" value="PP_kinase"/>
    <property type="match status" value="1"/>
</dbReference>
<dbReference type="SUPFAM" id="SSF56024">
    <property type="entry name" value="Phospholipase D/nuclease"/>
    <property type="match status" value="2"/>
</dbReference>
<dbReference type="SUPFAM" id="SSF143724">
    <property type="entry name" value="PHP14-like"/>
    <property type="match status" value="1"/>
</dbReference>
<dbReference type="SUPFAM" id="SSF140356">
    <property type="entry name" value="PPK N-terminal domain-like"/>
    <property type="match status" value="1"/>
</dbReference>
<keyword id="KW-0067">ATP-binding</keyword>
<keyword id="KW-0418">Kinase</keyword>
<keyword id="KW-0460">Magnesium</keyword>
<keyword id="KW-0479">Metal-binding</keyword>
<keyword id="KW-0547">Nucleotide-binding</keyword>
<keyword id="KW-0597">Phosphoprotein</keyword>
<keyword id="KW-0808">Transferase</keyword>
<comment type="function">
    <text evidence="1">Catalyzes the reversible transfer of the terminal phosphate of ATP to form a long-chain polyphosphate (polyP).</text>
</comment>
<comment type="catalytic activity">
    <reaction evidence="1">
        <text>[phosphate](n) + ATP = [phosphate](n+1) + ADP</text>
        <dbReference type="Rhea" id="RHEA:19573"/>
        <dbReference type="Rhea" id="RHEA-COMP:9859"/>
        <dbReference type="Rhea" id="RHEA-COMP:14280"/>
        <dbReference type="ChEBI" id="CHEBI:16838"/>
        <dbReference type="ChEBI" id="CHEBI:30616"/>
        <dbReference type="ChEBI" id="CHEBI:456216"/>
        <dbReference type="EC" id="2.7.4.1"/>
    </reaction>
</comment>
<comment type="cofactor">
    <cofactor evidence="1">
        <name>Mg(2+)</name>
        <dbReference type="ChEBI" id="CHEBI:18420"/>
    </cofactor>
</comment>
<comment type="PTM">
    <text evidence="1">An intermediate of this reaction is the autophosphorylated ppk in which a phosphate is covalently linked to a histidine residue through a N-P bond.</text>
</comment>
<comment type="similarity">
    <text evidence="1">Belongs to the polyphosphate kinase 1 (PPK1) family.</text>
</comment>
<gene>
    <name evidence="1" type="primary">ppk</name>
    <name type="ordered locus">A1S_0990</name>
</gene>